<evidence type="ECO:0000255" key="1">
    <source>
        <dbReference type="HAMAP-Rule" id="MF_00235"/>
    </source>
</evidence>
<dbReference type="EC" id="2.7.4.3" evidence="1"/>
<dbReference type="EMBL" id="CP000472">
    <property type="protein sequence ID" value="ACJ28505.1"/>
    <property type="molecule type" value="Genomic_DNA"/>
</dbReference>
<dbReference type="RefSeq" id="WP_020911883.1">
    <property type="nucleotide sequence ID" value="NC_011566.1"/>
</dbReference>
<dbReference type="SMR" id="B8CN03"/>
<dbReference type="STRING" id="225849.swp_1735"/>
<dbReference type="KEGG" id="swp:swp_1735"/>
<dbReference type="eggNOG" id="COG0563">
    <property type="taxonomic scope" value="Bacteria"/>
</dbReference>
<dbReference type="HOGENOM" id="CLU_032354_1_2_6"/>
<dbReference type="OrthoDB" id="9805030at2"/>
<dbReference type="UniPathway" id="UPA00588">
    <property type="reaction ID" value="UER00649"/>
</dbReference>
<dbReference type="Proteomes" id="UP000000753">
    <property type="component" value="Chromosome"/>
</dbReference>
<dbReference type="GO" id="GO:0005737">
    <property type="term" value="C:cytoplasm"/>
    <property type="evidence" value="ECO:0007669"/>
    <property type="project" value="UniProtKB-SubCell"/>
</dbReference>
<dbReference type="GO" id="GO:0004017">
    <property type="term" value="F:adenylate kinase activity"/>
    <property type="evidence" value="ECO:0007669"/>
    <property type="project" value="UniProtKB-UniRule"/>
</dbReference>
<dbReference type="GO" id="GO:0005524">
    <property type="term" value="F:ATP binding"/>
    <property type="evidence" value="ECO:0007669"/>
    <property type="project" value="UniProtKB-UniRule"/>
</dbReference>
<dbReference type="GO" id="GO:0044209">
    <property type="term" value="P:AMP salvage"/>
    <property type="evidence" value="ECO:0007669"/>
    <property type="project" value="UniProtKB-UniRule"/>
</dbReference>
<dbReference type="CDD" id="cd01428">
    <property type="entry name" value="ADK"/>
    <property type="match status" value="1"/>
</dbReference>
<dbReference type="FunFam" id="3.40.50.300:FF:000106">
    <property type="entry name" value="Adenylate kinase mitochondrial"/>
    <property type="match status" value="1"/>
</dbReference>
<dbReference type="Gene3D" id="3.40.50.300">
    <property type="entry name" value="P-loop containing nucleotide triphosphate hydrolases"/>
    <property type="match status" value="1"/>
</dbReference>
<dbReference type="HAMAP" id="MF_00235">
    <property type="entry name" value="Adenylate_kinase_Adk"/>
    <property type="match status" value="1"/>
</dbReference>
<dbReference type="InterPro" id="IPR006259">
    <property type="entry name" value="Adenyl_kin_sub"/>
</dbReference>
<dbReference type="InterPro" id="IPR000850">
    <property type="entry name" value="Adenylat/UMP-CMP_kin"/>
</dbReference>
<dbReference type="InterPro" id="IPR033690">
    <property type="entry name" value="Adenylat_kinase_CS"/>
</dbReference>
<dbReference type="InterPro" id="IPR007862">
    <property type="entry name" value="Adenylate_kinase_lid-dom"/>
</dbReference>
<dbReference type="InterPro" id="IPR027417">
    <property type="entry name" value="P-loop_NTPase"/>
</dbReference>
<dbReference type="NCBIfam" id="TIGR01351">
    <property type="entry name" value="adk"/>
    <property type="match status" value="1"/>
</dbReference>
<dbReference type="NCBIfam" id="NF001379">
    <property type="entry name" value="PRK00279.1-1"/>
    <property type="match status" value="1"/>
</dbReference>
<dbReference type="NCBIfam" id="NF001380">
    <property type="entry name" value="PRK00279.1-2"/>
    <property type="match status" value="1"/>
</dbReference>
<dbReference type="NCBIfam" id="NF001381">
    <property type="entry name" value="PRK00279.1-3"/>
    <property type="match status" value="1"/>
</dbReference>
<dbReference type="PANTHER" id="PTHR23359">
    <property type="entry name" value="NUCLEOTIDE KINASE"/>
    <property type="match status" value="1"/>
</dbReference>
<dbReference type="Pfam" id="PF00406">
    <property type="entry name" value="ADK"/>
    <property type="match status" value="1"/>
</dbReference>
<dbReference type="Pfam" id="PF05191">
    <property type="entry name" value="ADK_lid"/>
    <property type="match status" value="1"/>
</dbReference>
<dbReference type="PRINTS" id="PR00094">
    <property type="entry name" value="ADENYLTKNASE"/>
</dbReference>
<dbReference type="SUPFAM" id="SSF52540">
    <property type="entry name" value="P-loop containing nucleoside triphosphate hydrolases"/>
    <property type="match status" value="1"/>
</dbReference>
<dbReference type="PROSITE" id="PS00113">
    <property type="entry name" value="ADENYLATE_KINASE"/>
    <property type="match status" value="1"/>
</dbReference>
<reference key="1">
    <citation type="journal article" date="2008" name="PLoS ONE">
        <title>Environmental adaptation: genomic analysis of the piezotolerant and psychrotolerant deep-sea iron reducing bacterium Shewanella piezotolerans WP3.</title>
        <authorList>
            <person name="Wang F."/>
            <person name="Wang J."/>
            <person name="Jian H."/>
            <person name="Zhang B."/>
            <person name="Li S."/>
            <person name="Wang F."/>
            <person name="Zeng X."/>
            <person name="Gao L."/>
            <person name="Bartlett D.H."/>
            <person name="Yu J."/>
            <person name="Hu S."/>
            <person name="Xiao X."/>
        </authorList>
    </citation>
    <scope>NUCLEOTIDE SEQUENCE [LARGE SCALE GENOMIC DNA]</scope>
    <source>
        <strain>WP3 / JCM 13877</strain>
    </source>
</reference>
<sequence length="214" mass="23033">MRIMLLGAPGAGKGTQAQFIMEKYGIPQISTGDMLRAAVKAGTPLGLEAKKVMDAGQLVSDELIIGLVKERVAQDDCAKGFLLDGFPRTIPQADAMAAGGIAIDHVVEIDVPDEEIVKRMGGRRVHPGSGRVYHIVFNQPKVEGKDDVTGEDLAIRPDDEEATVRKRLDIYHEQTKPLVEYYGAVAAKGEATYNKFDGTQSVAKVSEEIVAALS</sequence>
<keyword id="KW-0067">ATP-binding</keyword>
<keyword id="KW-0963">Cytoplasm</keyword>
<keyword id="KW-0418">Kinase</keyword>
<keyword id="KW-0545">Nucleotide biosynthesis</keyword>
<keyword id="KW-0547">Nucleotide-binding</keyword>
<keyword id="KW-0808">Transferase</keyword>
<feature type="chain" id="PRO_1000191166" description="Adenylate kinase">
    <location>
        <begin position="1"/>
        <end position="214"/>
    </location>
</feature>
<feature type="region of interest" description="NMP" evidence="1">
    <location>
        <begin position="30"/>
        <end position="59"/>
    </location>
</feature>
<feature type="region of interest" description="LID" evidence="1">
    <location>
        <begin position="122"/>
        <end position="159"/>
    </location>
</feature>
<feature type="binding site" evidence="1">
    <location>
        <begin position="10"/>
        <end position="15"/>
    </location>
    <ligand>
        <name>ATP</name>
        <dbReference type="ChEBI" id="CHEBI:30616"/>
    </ligand>
</feature>
<feature type="binding site" evidence="1">
    <location>
        <position position="31"/>
    </location>
    <ligand>
        <name>AMP</name>
        <dbReference type="ChEBI" id="CHEBI:456215"/>
    </ligand>
</feature>
<feature type="binding site" evidence="1">
    <location>
        <position position="36"/>
    </location>
    <ligand>
        <name>AMP</name>
        <dbReference type="ChEBI" id="CHEBI:456215"/>
    </ligand>
</feature>
<feature type="binding site" evidence="1">
    <location>
        <begin position="57"/>
        <end position="59"/>
    </location>
    <ligand>
        <name>AMP</name>
        <dbReference type="ChEBI" id="CHEBI:456215"/>
    </ligand>
</feature>
<feature type="binding site" evidence="1">
    <location>
        <begin position="85"/>
        <end position="88"/>
    </location>
    <ligand>
        <name>AMP</name>
        <dbReference type="ChEBI" id="CHEBI:456215"/>
    </ligand>
</feature>
<feature type="binding site" evidence="1">
    <location>
        <position position="92"/>
    </location>
    <ligand>
        <name>AMP</name>
        <dbReference type="ChEBI" id="CHEBI:456215"/>
    </ligand>
</feature>
<feature type="binding site" evidence="1">
    <location>
        <position position="123"/>
    </location>
    <ligand>
        <name>ATP</name>
        <dbReference type="ChEBI" id="CHEBI:30616"/>
    </ligand>
</feature>
<feature type="binding site" evidence="1">
    <location>
        <begin position="132"/>
        <end position="133"/>
    </location>
    <ligand>
        <name>ATP</name>
        <dbReference type="ChEBI" id="CHEBI:30616"/>
    </ligand>
</feature>
<feature type="binding site" evidence="1">
    <location>
        <position position="156"/>
    </location>
    <ligand>
        <name>AMP</name>
        <dbReference type="ChEBI" id="CHEBI:456215"/>
    </ligand>
</feature>
<feature type="binding site" evidence="1">
    <location>
        <position position="167"/>
    </location>
    <ligand>
        <name>AMP</name>
        <dbReference type="ChEBI" id="CHEBI:456215"/>
    </ligand>
</feature>
<feature type="binding site" evidence="1">
    <location>
        <position position="200"/>
    </location>
    <ligand>
        <name>ATP</name>
        <dbReference type="ChEBI" id="CHEBI:30616"/>
    </ligand>
</feature>
<protein>
    <recommendedName>
        <fullName evidence="1">Adenylate kinase</fullName>
        <shortName evidence="1">AK</shortName>
        <ecNumber evidence="1">2.7.4.3</ecNumber>
    </recommendedName>
    <alternativeName>
        <fullName evidence="1">ATP-AMP transphosphorylase</fullName>
    </alternativeName>
    <alternativeName>
        <fullName evidence="1">ATP:AMP phosphotransferase</fullName>
    </alternativeName>
    <alternativeName>
        <fullName evidence="1">Adenylate monophosphate kinase</fullName>
    </alternativeName>
</protein>
<gene>
    <name evidence="1" type="primary">adk</name>
    <name type="ordered locus">swp_1735</name>
</gene>
<accession>B8CN03</accession>
<comment type="function">
    <text evidence="1">Catalyzes the reversible transfer of the terminal phosphate group between ATP and AMP. Plays an important role in cellular energy homeostasis and in adenine nucleotide metabolism.</text>
</comment>
<comment type="catalytic activity">
    <reaction evidence="1">
        <text>AMP + ATP = 2 ADP</text>
        <dbReference type="Rhea" id="RHEA:12973"/>
        <dbReference type="ChEBI" id="CHEBI:30616"/>
        <dbReference type="ChEBI" id="CHEBI:456215"/>
        <dbReference type="ChEBI" id="CHEBI:456216"/>
        <dbReference type="EC" id="2.7.4.3"/>
    </reaction>
</comment>
<comment type="pathway">
    <text evidence="1">Purine metabolism; AMP biosynthesis via salvage pathway; AMP from ADP: step 1/1.</text>
</comment>
<comment type="subunit">
    <text evidence="1">Monomer.</text>
</comment>
<comment type="subcellular location">
    <subcellularLocation>
        <location evidence="1">Cytoplasm</location>
    </subcellularLocation>
</comment>
<comment type="domain">
    <text evidence="1">Consists of three domains, a large central CORE domain and two small peripheral domains, NMPbind and LID, which undergo movements during catalysis. The LID domain closes over the site of phosphoryl transfer upon ATP binding. Assembling and dissambling the active center during each catalytic cycle provides an effective means to prevent ATP hydrolysis.</text>
</comment>
<comment type="similarity">
    <text evidence="1">Belongs to the adenylate kinase family.</text>
</comment>
<name>KAD_SHEPW</name>
<proteinExistence type="inferred from homology"/>
<organism>
    <name type="scientific">Shewanella piezotolerans (strain WP3 / JCM 13877)</name>
    <dbReference type="NCBI Taxonomy" id="225849"/>
    <lineage>
        <taxon>Bacteria</taxon>
        <taxon>Pseudomonadati</taxon>
        <taxon>Pseudomonadota</taxon>
        <taxon>Gammaproteobacteria</taxon>
        <taxon>Alteromonadales</taxon>
        <taxon>Shewanellaceae</taxon>
        <taxon>Shewanella</taxon>
    </lineage>
</organism>